<accession>Q50373</accession>
<comment type="function">
    <text evidence="1">Together with its co-chaperonin GroES, plays an essential role in assisting protein folding. The GroEL-GroES system forms a nano-cage that allows encapsulation of the non-native substrate proteins and provides a physical environment optimized to promote and accelerate protein folding.</text>
</comment>
<comment type="catalytic activity">
    <reaction evidence="1">
        <text>ATP + H2O + a folded polypeptide = ADP + phosphate + an unfolded polypeptide.</text>
        <dbReference type="EC" id="5.6.1.7"/>
    </reaction>
</comment>
<comment type="subunit">
    <text evidence="1">Forms a cylinder of 14 subunits composed of two heptameric rings stacked back-to-back. Interacts with the co-chaperonin GroES.</text>
</comment>
<comment type="subcellular location">
    <subcellularLocation>
        <location evidence="1">Cytoplasm</location>
    </subcellularLocation>
</comment>
<comment type="similarity">
    <text evidence="1 2">Belongs to the chaperonin (HSP60) family.</text>
</comment>
<feature type="chain" id="PRO_0000063447" description="Chaperonin GroEL">
    <location>
        <begin position="1" status="less than"/>
        <end position="120" status="greater than"/>
    </location>
</feature>
<feature type="binding site" evidence="1">
    <location>
        <begin position="23"/>
        <end position="27"/>
    </location>
    <ligand>
        <name>ATP</name>
        <dbReference type="ChEBI" id="CHEBI:30616"/>
    </ligand>
</feature>
<feature type="non-terminal residue">
    <location>
        <position position="1"/>
    </location>
</feature>
<feature type="non-terminal residue">
    <location>
        <position position="120"/>
    </location>
</feature>
<evidence type="ECO:0000255" key="1">
    <source>
        <dbReference type="HAMAP-Rule" id="MF_00600"/>
    </source>
</evidence>
<evidence type="ECO:0000305" key="2"/>
<dbReference type="EC" id="5.6.1.7" evidence="1"/>
<dbReference type="EMBL" id="U17954">
    <property type="protein sequence ID" value="AAB39073.1"/>
    <property type="molecule type" value="Genomic_DNA"/>
</dbReference>
<dbReference type="SMR" id="Q50373"/>
<dbReference type="GO" id="GO:0005737">
    <property type="term" value="C:cytoplasm"/>
    <property type="evidence" value="ECO:0007669"/>
    <property type="project" value="UniProtKB-SubCell"/>
</dbReference>
<dbReference type="GO" id="GO:0005524">
    <property type="term" value="F:ATP binding"/>
    <property type="evidence" value="ECO:0007669"/>
    <property type="project" value="UniProtKB-KW"/>
</dbReference>
<dbReference type="GO" id="GO:0140662">
    <property type="term" value="F:ATP-dependent protein folding chaperone"/>
    <property type="evidence" value="ECO:0007669"/>
    <property type="project" value="InterPro"/>
</dbReference>
<dbReference type="GO" id="GO:0016853">
    <property type="term" value="F:isomerase activity"/>
    <property type="evidence" value="ECO:0007669"/>
    <property type="project" value="UniProtKB-KW"/>
</dbReference>
<dbReference type="GO" id="GO:0042026">
    <property type="term" value="P:protein refolding"/>
    <property type="evidence" value="ECO:0007669"/>
    <property type="project" value="InterPro"/>
</dbReference>
<dbReference type="Gene3D" id="1.10.560.10">
    <property type="entry name" value="GroEL-like equatorial domain"/>
    <property type="match status" value="1"/>
</dbReference>
<dbReference type="Gene3D" id="3.30.260.10">
    <property type="entry name" value="TCP-1-like chaperonin intermediate domain"/>
    <property type="match status" value="1"/>
</dbReference>
<dbReference type="InterPro" id="IPR001844">
    <property type="entry name" value="Cpn60/GroEL"/>
</dbReference>
<dbReference type="InterPro" id="IPR002423">
    <property type="entry name" value="Cpn60/GroEL/TCP-1"/>
</dbReference>
<dbReference type="InterPro" id="IPR027413">
    <property type="entry name" value="GROEL-like_equatorial_sf"/>
</dbReference>
<dbReference type="InterPro" id="IPR027410">
    <property type="entry name" value="TCP-1-like_intermed_sf"/>
</dbReference>
<dbReference type="PANTHER" id="PTHR45633">
    <property type="entry name" value="60 KDA HEAT SHOCK PROTEIN, MITOCHONDRIAL"/>
    <property type="match status" value="1"/>
</dbReference>
<dbReference type="Pfam" id="PF00118">
    <property type="entry name" value="Cpn60_TCP1"/>
    <property type="match status" value="1"/>
</dbReference>
<dbReference type="SUPFAM" id="SSF48592">
    <property type="entry name" value="GroEL equatorial domain-like"/>
    <property type="match status" value="1"/>
</dbReference>
<name>CH60_MYCRH</name>
<gene>
    <name evidence="1" type="primary">groEL</name>
    <name evidence="1" type="synonym">groL</name>
    <name type="synonym">mopA</name>
</gene>
<organism>
    <name type="scientific">Mycolicibacterium rhodesiae</name>
    <name type="common">Mycobacterium rhodesiae</name>
    <dbReference type="NCBI Taxonomy" id="36814"/>
    <lineage>
        <taxon>Bacteria</taxon>
        <taxon>Bacillati</taxon>
        <taxon>Actinomycetota</taxon>
        <taxon>Actinomycetes</taxon>
        <taxon>Mycobacteriales</taxon>
        <taxon>Mycobacteriaceae</taxon>
        <taxon>Mycolicibacterium</taxon>
    </lineage>
</organism>
<protein>
    <recommendedName>
        <fullName evidence="1">Chaperonin GroEL</fullName>
        <ecNumber evidence="1">5.6.1.7</ecNumber>
    </recommendedName>
    <alternativeName>
        <fullName evidence="1">60 kDa chaperonin</fullName>
    </alternativeName>
    <alternativeName>
        <fullName>65 kDa heat shock protein</fullName>
    </alternativeName>
    <alternativeName>
        <fullName evidence="1">Chaperonin-60</fullName>
        <shortName evidence="1">Cpn60</shortName>
    </alternativeName>
</protein>
<proteinExistence type="inferred from homology"/>
<keyword id="KW-0067">ATP-binding</keyword>
<keyword id="KW-0143">Chaperone</keyword>
<keyword id="KW-0963">Cytoplasm</keyword>
<keyword id="KW-0413">Isomerase</keyword>
<keyword id="KW-0547">Nucleotide-binding</keyword>
<keyword id="KW-0346">Stress response</keyword>
<reference key="1">
    <citation type="journal article" date="1995" name="Arch. Pathol. Lab. Med.">
        <title>Rapid Mycobacterium species assignment and unambiguous identification of mutations associated with antimicrobial resistance in Mycobacterium tuberculosis by automated DNA sequencing.</title>
        <authorList>
            <person name="Kapur V."/>
            <person name="Li L.L."/>
            <person name="Hamrick M.R."/>
            <person name="Plikaytis B.B."/>
            <person name="Shinnick T.M."/>
            <person name="Telenti A."/>
            <person name="Jacobs W.R. Jr."/>
            <person name="Banerjee A."/>
            <person name="Cole S."/>
            <person name="Yuen K.Y."/>
            <person name="Clarridge J.E."/>
            <person name="Kreiswirth B.N."/>
            <person name="Musser J.M."/>
        </authorList>
    </citation>
    <scope>NUCLEOTIDE SEQUENCE [GENOMIC DNA]</scope>
    <source>
        <strain>555</strain>
    </source>
</reference>
<sequence length="120" mass="12409">PYEKIGAELVKEVAKKTDDVAGDGTTTATVLAQALVREGLRNVAAGANPLGLKRGIEKAVEKITETLLKSAKEVETKDQIAATAGISAGDQTIGDLIAEAMDKVGNEGVITVEESNTFGL</sequence>